<keyword id="KW-0037">Angiogenesis</keyword>
<keyword id="KW-0217">Developmental protein</keyword>
<keyword id="KW-0221">Differentiation</keyword>
<keyword id="KW-1015">Disulfide bond</keyword>
<keyword id="KW-0328">Glycosyltransferase</keyword>
<keyword id="KW-0464">Manganese</keyword>
<keyword id="KW-0472">Membrane</keyword>
<keyword id="KW-0479">Metal-binding</keyword>
<keyword id="KW-0547">Nucleotide-binding</keyword>
<keyword id="KW-0597">Phosphoprotein</keyword>
<keyword id="KW-1185">Reference proteome</keyword>
<keyword id="KW-0735">Signal-anchor</keyword>
<keyword id="KW-0808">Transferase</keyword>
<keyword id="KW-0812">Transmembrane</keyword>
<keyword id="KW-1133">Transmembrane helix</keyword>
<feature type="chain" id="PRO_0000285063" description="Glycoprotein-N-acetylgalactosamine 3-beta-galactosyltransferase 1">
    <location>
        <begin position="1"/>
        <end position="368"/>
    </location>
</feature>
<feature type="topological domain" description="Cytoplasmic" evidence="5">
    <location>
        <begin position="1"/>
        <end position="6"/>
    </location>
</feature>
<feature type="transmembrane region" description="Helical; Signal-anchor for type II membrane protein" evidence="5">
    <location>
        <begin position="7"/>
        <end position="29"/>
    </location>
</feature>
<feature type="topological domain" description="Lumenal" evidence="5">
    <location>
        <begin position="30"/>
        <end position="368"/>
    </location>
</feature>
<feature type="binding site" evidence="1">
    <location>
        <position position="94"/>
    </location>
    <ligand>
        <name>UDP</name>
        <dbReference type="ChEBI" id="CHEBI:58223"/>
    </ligand>
</feature>
<feature type="binding site" evidence="1">
    <location>
        <position position="138"/>
    </location>
    <ligand>
        <name>UDP</name>
        <dbReference type="ChEBI" id="CHEBI:58223"/>
    </ligand>
</feature>
<feature type="binding site" evidence="1">
    <location>
        <position position="139"/>
    </location>
    <ligand>
        <name>UDP</name>
        <dbReference type="ChEBI" id="CHEBI:58223"/>
    </ligand>
</feature>
<feature type="binding site" evidence="1">
    <location>
        <position position="140"/>
    </location>
    <ligand>
        <name>UDP</name>
        <dbReference type="ChEBI" id="CHEBI:58223"/>
    </ligand>
</feature>
<feature type="binding site" evidence="1">
    <location>
        <position position="146"/>
    </location>
    <ligand>
        <name>UDP</name>
        <dbReference type="ChEBI" id="CHEBI:58223"/>
    </ligand>
</feature>
<feature type="binding site" evidence="1">
    <location>
        <position position="169"/>
    </location>
    <ligand>
        <name>Mn(2+)</name>
        <dbReference type="ChEBI" id="CHEBI:29035"/>
    </ligand>
</feature>
<feature type="binding site" evidence="1">
    <location>
        <position position="169"/>
    </location>
    <ligand>
        <name>UDP</name>
        <dbReference type="ChEBI" id="CHEBI:58223"/>
    </ligand>
</feature>
<feature type="binding site" evidence="1">
    <location>
        <position position="171"/>
    </location>
    <ligand>
        <name>Mn(2+)</name>
        <dbReference type="ChEBI" id="CHEBI:29035"/>
    </ligand>
</feature>
<feature type="binding site" evidence="1">
    <location>
        <position position="285"/>
    </location>
    <ligand>
        <name>a glycoprotein</name>
        <dbReference type="ChEBI" id="CHEBI:17089"/>
    </ligand>
</feature>
<feature type="binding site" evidence="1">
    <location>
        <position position="309"/>
    </location>
    <ligand>
        <name>Mn(2+)</name>
        <dbReference type="ChEBI" id="CHEBI:29035"/>
    </ligand>
</feature>
<feature type="binding site" evidence="1">
    <location>
        <position position="309"/>
    </location>
    <ligand>
        <name>UDP</name>
        <dbReference type="ChEBI" id="CHEBI:58223"/>
    </ligand>
</feature>
<feature type="binding site" evidence="1">
    <location>
        <position position="310"/>
    </location>
    <ligand>
        <name>UDP</name>
        <dbReference type="ChEBI" id="CHEBI:58223"/>
    </ligand>
</feature>
<feature type="modified residue" description="Phosphoserine" evidence="3">
    <location>
        <position position="235"/>
    </location>
</feature>
<feature type="disulfide bond" evidence="1">
    <location>
        <begin position="91"/>
        <end position="115"/>
    </location>
</feature>
<feature type="disulfide bond" evidence="1">
    <location>
        <begin position="232"/>
        <end position="246"/>
    </location>
</feature>
<feature type="disulfide bond" evidence="1">
    <location>
        <begin position="300"/>
        <end position="301"/>
    </location>
</feature>
<comment type="function">
    <text evidence="1 3 4">Glycosyltransferase that generates the core 1 O-glycan Gal-beta1-3GalNAc-alpha1-Ser/Thr (T antigen), which is a precursor for many extended O-glycans in glycoproteins (By similarity). Plays a central role in many processes, such as angiogenesis, thrombopoiesis and kidney homeostasis development (By similarity).</text>
</comment>
<comment type="catalytic activity">
    <reaction evidence="4">
        <text>an N-acetyl-alpha-D-galactosaminyl derivative + UDP-alpha-D-galactose = a beta-D-galactosyl-(1-&gt;3)-N-acetyl-alpha-D-galactosaminyl derivative + UDP + H(+)</text>
        <dbReference type="Rhea" id="RHEA:15621"/>
        <dbReference type="ChEBI" id="CHEBI:15378"/>
        <dbReference type="ChEBI" id="CHEBI:28257"/>
        <dbReference type="ChEBI" id="CHEBI:58223"/>
        <dbReference type="ChEBI" id="CHEBI:66914"/>
        <dbReference type="ChEBI" id="CHEBI:133470"/>
        <dbReference type="EC" id="2.4.1.122"/>
    </reaction>
</comment>
<comment type="catalytic activity">
    <reaction evidence="1">
        <text>a 3-O-[N-acetyl-alpha-D-galactosaminyl]-L-threonyl-[protein] + UDP-alpha-D-galactose = a 3-O-[beta-D-galactosyl-(1-&gt;3)-N-acetyl-alpha-D-galactosaminyl]-L-threonyl-[protein] + UDP + H(+)</text>
        <dbReference type="Rhea" id="RHEA:56196"/>
        <dbReference type="Rhea" id="RHEA-COMP:11689"/>
        <dbReference type="Rhea" id="RHEA-COMP:13923"/>
        <dbReference type="ChEBI" id="CHEBI:15378"/>
        <dbReference type="ChEBI" id="CHEBI:58223"/>
        <dbReference type="ChEBI" id="CHEBI:66914"/>
        <dbReference type="ChEBI" id="CHEBI:87075"/>
        <dbReference type="ChEBI" id="CHEBI:137950"/>
    </reaction>
    <physiologicalReaction direction="left-to-right" evidence="1">
        <dbReference type="Rhea" id="RHEA:56197"/>
    </physiologicalReaction>
</comment>
<comment type="catalytic activity">
    <reaction evidence="1">
        <text>a 3-O-[N-acetyl-alpha-D-galactosaminyl]-L-seryl-[protein] + UDP-alpha-D-galactose = a 3-O-[beta-D-galactosyl-(1-&gt;3)-N-acetyl-alpha-D-galactosaminyl]-L-seryl-[protein] + UDP + H(+)</text>
        <dbReference type="Rhea" id="RHEA:56200"/>
        <dbReference type="Rhea" id="RHEA-COMP:12788"/>
        <dbReference type="Rhea" id="RHEA-COMP:13922"/>
        <dbReference type="ChEBI" id="CHEBI:15378"/>
        <dbReference type="ChEBI" id="CHEBI:53604"/>
        <dbReference type="ChEBI" id="CHEBI:58223"/>
        <dbReference type="ChEBI" id="CHEBI:66914"/>
        <dbReference type="ChEBI" id="CHEBI:137949"/>
    </reaction>
    <physiologicalReaction direction="left-to-right" evidence="1">
        <dbReference type="Rhea" id="RHEA:56201"/>
    </physiologicalReaction>
</comment>
<comment type="cofactor">
    <cofactor evidence="2">
        <name>Mn(2+)</name>
        <dbReference type="ChEBI" id="CHEBI:29035"/>
    </cofactor>
</comment>
<comment type="pathway">
    <text evidence="4">Protein modification; protein glycosylation.</text>
</comment>
<comment type="subunit">
    <text evidence="2 4">Homodimer; disulfide-linked (By similarity). Interacts with the C1GALT1C1 chaperone; required for galactosyltransferase activity (By similarity).</text>
</comment>
<comment type="subcellular location">
    <subcellularLocation>
        <location evidence="2">Membrane</location>
        <topology evidence="5">Single-pass type II membrane protein</topology>
    </subcellularLocation>
</comment>
<comment type="similarity">
    <text evidence="6">Belongs to the glycosyltransferase 31 family. Beta3-Gal-T subfamily.</text>
</comment>
<protein>
    <recommendedName>
        <fullName>Glycoprotein-N-acetylgalactosamine 3-beta-galactosyltransferase 1</fullName>
        <ecNumber evidence="4">2.4.1.122</ecNumber>
    </recommendedName>
    <alternativeName>
        <fullName>Core 1 O-glycan T-synthase</fullName>
    </alternativeName>
    <alternativeName>
        <fullName>Core 1 UDP-galactose:N-acetylgalactosamine-alpha-R beta 1,3-galactosyltransferase 1</fullName>
    </alternativeName>
    <alternativeName>
        <fullName>Core 1 beta1,3-galactosyltransferase 1</fullName>
        <shortName>C1GalT1</shortName>
        <shortName>Core 1 beta3-Gal-T1</shortName>
    </alternativeName>
</protein>
<proteinExistence type="evidence at transcript level"/>
<name>C1GLT_BOVIN</name>
<evidence type="ECO:0000250" key="1">
    <source>
        <dbReference type="UniProtKB" id="Q7K237"/>
    </source>
</evidence>
<evidence type="ECO:0000250" key="2">
    <source>
        <dbReference type="UniProtKB" id="Q9JJ05"/>
    </source>
</evidence>
<evidence type="ECO:0000250" key="3">
    <source>
        <dbReference type="UniProtKB" id="Q9JJ06"/>
    </source>
</evidence>
<evidence type="ECO:0000250" key="4">
    <source>
        <dbReference type="UniProtKB" id="Q9NS00"/>
    </source>
</evidence>
<evidence type="ECO:0000255" key="5"/>
<evidence type="ECO:0000305" key="6"/>
<reference key="1">
    <citation type="submission" date="2006-08" db="EMBL/GenBank/DDBJ databases">
        <authorList>
            <consortium name="NIH - Mammalian Gene Collection (MGC) project"/>
        </authorList>
    </citation>
    <scope>NUCLEOTIDE SEQUENCE [LARGE SCALE MRNA]</scope>
    <source>
        <strain>Hereford</strain>
        <tissue>Placenta</tissue>
    </source>
</reference>
<dbReference type="EC" id="2.4.1.122" evidence="4"/>
<dbReference type="EMBL" id="BC120299">
    <property type="protein sequence ID" value="AAI20300.1"/>
    <property type="molecule type" value="mRNA"/>
</dbReference>
<dbReference type="RefSeq" id="NP_001069628.1">
    <property type="nucleotide sequence ID" value="NM_001076160.2"/>
</dbReference>
<dbReference type="RefSeq" id="XP_005205216.1">
    <property type="nucleotide sequence ID" value="XM_005205159.3"/>
</dbReference>
<dbReference type="RefSeq" id="XP_015323642.1">
    <property type="nucleotide sequence ID" value="XM_015468156.1"/>
</dbReference>
<dbReference type="RefSeq" id="XP_024846596.1">
    <property type="nucleotide sequence ID" value="XM_024990828.2"/>
</dbReference>
<dbReference type="SMR" id="Q0VC84"/>
<dbReference type="FunCoup" id="Q0VC84">
    <property type="interactions" value="787"/>
</dbReference>
<dbReference type="STRING" id="9913.ENSBTAP00000006571"/>
<dbReference type="CAZy" id="GT31">
    <property type="family name" value="Glycosyltransferase Family 31"/>
</dbReference>
<dbReference type="PaxDb" id="9913-ENSBTAP00000006571"/>
<dbReference type="GeneID" id="539417"/>
<dbReference type="KEGG" id="bta:539417"/>
<dbReference type="CTD" id="56913"/>
<dbReference type="VEuPathDB" id="HostDB:ENSBTAG00000004995"/>
<dbReference type="eggNOG" id="KOG2246">
    <property type="taxonomic scope" value="Eukaryota"/>
</dbReference>
<dbReference type="HOGENOM" id="CLU_035857_0_0_1"/>
<dbReference type="InParanoid" id="Q0VC84"/>
<dbReference type="OMA" id="WLLSKHD"/>
<dbReference type="OrthoDB" id="414175at2759"/>
<dbReference type="TreeFam" id="TF317293"/>
<dbReference type="Reactome" id="R-BTA-913709">
    <property type="pathway name" value="O-linked glycosylation of mucins"/>
</dbReference>
<dbReference type="UniPathway" id="UPA00378"/>
<dbReference type="Proteomes" id="UP000009136">
    <property type="component" value="Chromosome 4"/>
</dbReference>
<dbReference type="Bgee" id="ENSBTAG00000004995">
    <property type="expression patterns" value="Expressed in abomasum and 108 other cell types or tissues"/>
</dbReference>
<dbReference type="GO" id="GO:0016020">
    <property type="term" value="C:membrane"/>
    <property type="evidence" value="ECO:0000250"/>
    <property type="project" value="UniProtKB"/>
</dbReference>
<dbReference type="GO" id="GO:0016263">
    <property type="term" value="F:glycoprotein-N-acetylgalactosamine 3-beta-galactosyltransferase activity"/>
    <property type="evidence" value="ECO:0000250"/>
    <property type="project" value="UniProtKB"/>
</dbReference>
<dbReference type="GO" id="GO:0046872">
    <property type="term" value="F:metal ion binding"/>
    <property type="evidence" value="ECO:0007669"/>
    <property type="project" value="UniProtKB-KW"/>
</dbReference>
<dbReference type="GO" id="GO:0000166">
    <property type="term" value="F:nucleotide binding"/>
    <property type="evidence" value="ECO:0007669"/>
    <property type="project" value="UniProtKB-KW"/>
</dbReference>
<dbReference type="GO" id="GO:0001525">
    <property type="term" value="P:angiogenesis"/>
    <property type="evidence" value="ECO:0000250"/>
    <property type="project" value="UniProtKB"/>
</dbReference>
<dbReference type="GO" id="GO:0030154">
    <property type="term" value="P:cell differentiation"/>
    <property type="evidence" value="ECO:0007669"/>
    <property type="project" value="UniProtKB-KW"/>
</dbReference>
<dbReference type="GO" id="GO:0001822">
    <property type="term" value="P:kidney development"/>
    <property type="evidence" value="ECO:0000250"/>
    <property type="project" value="UniProtKB"/>
</dbReference>
<dbReference type="GO" id="GO:0006486">
    <property type="term" value="P:protein glycosylation"/>
    <property type="evidence" value="ECO:0007669"/>
    <property type="project" value="UniProtKB-UniPathway"/>
</dbReference>
<dbReference type="FunFam" id="3.90.550.50:FF:000007">
    <property type="entry name" value="Glycoprotein-N-acetylgalactosamine 3-beta-galactosyltransferase 1"/>
    <property type="match status" value="1"/>
</dbReference>
<dbReference type="Gene3D" id="3.90.550.50">
    <property type="match status" value="1"/>
</dbReference>
<dbReference type="InterPro" id="IPR026050">
    <property type="entry name" value="C1GALT1/C1GALT1_chp1"/>
</dbReference>
<dbReference type="InterPro" id="IPR003378">
    <property type="entry name" value="Fringe-like_glycosylTrfase"/>
</dbReference>
<dbReference type="PANTHER" id="PTHR23033">
    <property type="entry name" value="BETA1,3-GALACTOSYLTRANSFERASE"/>
    <property type="match status" value="1"/>
</dbReference>
<dbReference type="PANTHER" id="PTHR23033:SF13">
    <property type="entry name" value="GLYCOPROTEIN-N-ACETYLGALACTOSAMINE 3-BETA-GALACTOSYLTRANSFERASE 1"/>
    <property type="match status" value="1"/>
</dbReference>
<dbReference type="Pfam" id="PF02434">
    <property type="entry name" value="Fringe"/>
    <property type="match status" value="1"/>
</dbReference>
<sequence length="368" mass="43041">MASKSWLNILTFLCGSAVGFVLCSQLLSILFEEQKDIQPSILHNDPHARHSDDNEQNHLEGQMNFDADASQHKDENTDIADKLYQKVKILCWVMTGPQNLEKKAKHVKATWAQRCNKVLFMSSEENKDFPAVGLKTREGRDQLYWKTIKAFQYVHDHYLEDADWFMKADDDTYVILDNLRWLLSKYNPEEPIYFGRRFKPYVKQGYMSGGAGYVLSKEALKRFVEAFKTDKCTHSSSIEDLALGRCMEIINVEAGDSRDTTGKETFHPFVPEHHLIKGYLPRTFWYWNYNYYPPVEGPGCCSDLAVSFHYVDPTTMYELEYLVYHLRPYGYLYRYQPALPEKMLKEVSQIYKNEDTNVNQEPLKEKHK</sequence>
<organism>
    <name type="scientific">Bos taurus</name>
    <name type="common">Bovine</name>
    <dbReference type="NCBI Taxonomy" id="9913"/>
    <lineage>
        <taxon>Eukaryota</taxon>
        <taxon>Metazoa</taxon>
        <taxon>Chordata</taxon>
        <taxon>Craniata</taxon>
        <taxon>Vertebrata</taxon>
        <taxon>Euteleostomi</taxon>
        <taxon>Mammalia</taxon>
        <taxon>Eutheria</taxon>
        <taxon>Laurasiatheria</taxon>
        <taxon>Artiodactyla</taxon>
        <taxon>Ruminantia</taxon>
        <taxon>Pecora</taxon>
        <taxon>Bovidae</taxon>
        <taxon>Bovinae</taxon>
        <taxon>Bos</taxon>
    </lineage>
</organism>
<accession>Q0VC84</accession>
<gene>
    <name type="primary">C1GALT1</name>
</gene>